<protein>
    <recommendedName>
        <fullName>Fusion glycoprotein F0</fullName>
    </recommendedName>
    <component>
        <recommendedName>
            <fullName>Fusion glycoprotein F2</fullName>
        </recommendedName>
    </component>
    <component>
        <recommendedName>
            <fullName>Fusion glycoprotein F1</fullName>
        </recommendedName>
    </component>
</protein>
<feature type="signal peptide" evidence="3">
    <location>
        <begin position="1"/>
        <end position="23"/>
    </location>
</feature>
<feature type="chain" id="PRO_0000039270" description="Fusion glycoprotein F0">
    <location>
        <begin position="24"/>
        <end position="550"/>
    </location>
</feature>
<feature type="chain" id="PRO_0000039271" description="Fusion glycoprotein F2">
    <location>
        <begin position="24"/>
        <end position="112"/>
    </location>
</feature>
<feature type="chain" id="PRO_0000039272" description="Fusion glycoprotein F1">
    <location>
        <begin position="113"/>
        <end position="550"/>
    </location>
</feature>
<feature type="topological domain" description="Extracellular" evidence="1">
    <location>
        <begin position="24"/>
        <end position="487"/>
    </location>
</feature>
<feature type="transmembrane region" description="Helical" evidence="3">
    <location>
        <begin position="488"/>
        <end position="518"/>
    </location>
</feature>
<feature type="topological domain" description="Cytoplasmic" evidence="1">
    <location>
        <begin position="519"/>
        <end position="550"/>
    </location>
</feature>
<feature type="region of interest" description="HRC" evidence="2">
    <location>
        <begin position="69"/>
        <end position="95"/>
    </location>
</feature>
<feature type="region of interest" description="Fusion peptide" evidence="2">
    <location>
        <begin position="113"/>
        <end position="138"/>
    </location>
</feature>
<feature type="region of interest" description="HRA" evidence="2">
    <location>
        <begin position="139"/>
        <end position="215"/>
    </location>
</feature>
<feature type="region of interest" description="Interaction with hemagglutinin" evidence="2">
    <location>
        <begin position="367"/>
        <end position="444"/>
    </location>
</feature>
<feature type="region of interest" description="HRB" evidence="2">
    <location>
        <begin position="445"/>
        <end position="494"/>
    </location>
</feature>
<feature type="coiled-coil region" evidence="3">
    <location>
        <begin position="138"/>
        <end position="166"/>
    </location>
</feature>
<feature type="coiled-coil region" evidence="3">
    <location>
        <begin position="462"/>
        <end position="487"/>
    </location>
</feature>
<feature type="site" description="Cleavage; by host" evidence="1">
    <location>
        <begin position="112"/>
        <end position="113"/>
    </location>
</feature>
<feature type="glycosylation site" description="N-linked (GlcNAc...) asparagine; by host" evidence="3">
    <location>
        <position position="29"/>
    </location>
</feature>
<feature type="glycosylation site" description="N-linked (GlcNAc...) asparagine; by host" evidence="3">
    <location>
        <position position="61"/>
    </location>
</feature>
<feature type="glycosylation site" description="N-linked (GlcNAc...) asparagine; by host" evidence="3">
    <location>
        <position position="67"/>
    </location>
</feature>
<feature type="disulfide bond" description="Interchain (with C-195)" evidence="2">
    <location>
        <position position="68"/>
    </location>
</feature>
<feature type="disulfide bond" description="Interchain (with C-68)" evidence="2">
    <location>
        <position position="195"/>
    </location>
</feature>
<feature type="disulfide bond" evidence="2">
    <location>
        <begin position="334"/>
        <end position="343"/>
    </location>
</feature>
<feature type="disulfide bond" evidence="2">
    <location>
        <begin position="358"/>
        <end position="366"/>
    </location>
</feature>
<feature type="disulfide bond" evidence="2">
    <location>
        <begin position="390"/>
        <end position="395"/>
    </location>
</feature>
<feature type="disulfide bond" evidence="2">
    <location>
        <begin position="397"/>
        <end position="420"/>
    </location>
</feature>
<organismHost>
    <name type="scientific">Homo sapiens</name>
    <name type="common">Human</name>
    <dbReference type="NCBI Taxonomy" id="9606"/>
</organismHost>
<name>FUS_MEASP</name>
<gene>
    <name type="primary">F</name>
</gene>
<keyword id="KW-0165">Cleavage on pair of basic residues</keyword>
<keyword id="KW-0175">Coiled coil</keyword>
<keyword id="KW-1015">Disulfide bond</keyword>
<keyword id="KW-1169">Fusion of virus membrane with host cell membrane</keyword>
<keyword id="KW-1168">Fusion of virus membrane with host membrane</keyword>
<keyword id="KW-0325">Glycoprotein</keyword>
<keyword id="KW-1032">Host cell membrane</keyword>
<keyword id="KW-1043">Host membrane</keyword>
<keyword id="KW-0472">Membrane</keyword>
<keyword id="KW-0732">Signal</keyword>
<keyword id="KW-0812">Transmembrane</keyword>
<keyword id="KW-1133">Transmembrane helix</keyword>
<keyword id="KW-0261">Viral envelope protein</keyword>
<keyword id="KW-1162">Viral penetration into host cytoplasm</keyword>
<keyword id="KW-0946">Virion</keyword>
<keyword id="KW-1160">Virus entry into host cell</keyword>
<organism>
    <name type="scientific">Measles virus (strain Philadelphia-26)</name>
    <name type="common">MeV</name>
    <name type="synonym">Subacute sclerose panencephalitis virus</name>
    <dbReference type="NCBI Taxonomy" id="70148"/>
    <lineage>
        <taxon>Viruses</taxon>
        <taxon>Riboviria</taxon>
        <taxon>Orthornavirae</taxon>
        <taxon>Negarnaviricota</taxon>
        <taxon>Haploviricotina</taxon>
        <taxon>Monjiviricetes</taxon>
        <taxon>Mononegavirales</taxon>
        <taxon>Paramyxoviridae</taxon>
        <taxon>Orthoparamyxovirinae</taxon>
        <taxon>Morbillivirus</taxon>
        <taxon>Morbillivirus hominis</taxon>
        <taxon>Measles morbillivirus</taxon>
    </lineage>
</organism>
<accession>P69357</accession>
<accession>P08300</accession>
<comment type="function">
    <text evidence="1 2">Class I viral fusion protein. Under the current model, the protein has at least 3 conformational states: pre-fusion native state, pre-hairpin intermediate state, and post-fusion hairpin state. During viral and plasma cell membrane fusion, the heptad repeat (HR) regions assume a trimer-of-hairpins structure, positioning the fusion peptide in close proximity to the C-terminal region of the ectodomain. The formation of this structure appears to drive apposition and subsequent fusion of viral and plasma cell membranes. Directs fusion of viral and cellular membranes leading to delivery of the nucleocapsid into the cytoplasm. This fusion is pH independent and occurs directly at the outer cell membrane. During viral entry or virus-mediated fusion between infected cells and neighboring susceptible cells, the head domain of the H protein initially binds to its receptor and then the stalk region of the H protein transmits the fusion-triggering signal to the F protein (By similarity). Upon HN binding to its cellular receptor, the hydrophobic fusion peptide is unmasked and interacts with the cellular membrane, inducing the fusion between cell and virion membranes. Later in infection, F proteins expressed at the plasma membrane of infected cells could mediate fusion with adjacent cells to form syncytia, a cytopathic effect that could lead to tissue necrosis (By similarity).</text>
</comment>
<comment type="function">
    <text evidence="2">Some hyperfusogenic isolates can induce membrane fusion in SLAM- and nectin-4-negative cells and are linked to fatal subacute sclerosing panencephalitis (SSPE) or measles inclusion body encephalitis (MIBE). The neuropathogenicity is closely associated with enhanced propagation mediated by cell-to-cell fusion in the brain, which is principally regulated by hyperfusogenic mutations of the viral F protein. Cell-to-cell transmission of the virus also occurs with hyperfusogenic isolates.</text>
</comment>
<comment type="subunit">
    <text evidence="2">Homotrimer of disulfide-linked F1-F2.</text>
</comment>
<comment type="subcellular location">
    <subcellularLocation>
        <location evidence="1">Virion membrane</location>
        <topology evidence="1">Single-pass type I membrane protein</topology>
    </subcellularLocation>
    <subcellularLocation>
        <location evidence="1">Host cell membrane</location>
        <topology evidence="1">Single-pass membrane protein</topology>
    </subcellularLocation>
</comment>
<comment type="domain">
    <text evidence="2">Contains 3 heptad repreat regions, HRA, HRB and HRC.</text>
</comment>
<comment type="PTM">
    <text evidence="2">The inactive precursor F0 is glycosylated and proteolytically cleaved into F1 and F2 to be functionally active. The cleavage is mediated by host furin during the transport and maturation of the polypeptide.</text>
</comment>
<comment type="similarity">
    <text evidence="4">Belongs to the paramyxoviruses fusion glycoprotein family.</text>
</comment>
<comment type="sequence caution" evidence="4">
    <conflict type="erroneous initiation">
        <sequence resource="EMBL-CDS" id="AAA50550"/>
    </conflict>
</comment>
<reference key="1">
    <citation type="journal article" date="1994" name="Virology">
        <title>Restriction of fusion protein mRNA as a mechanism of measles virus persistence.</title>
        <authorList>
            <person name="Hummel K.B."/>
            <person name="Vanchiere J.A."/>
            <person name="Bellini W.J."/>
        </authorList>
    </citation>
    <scope>NUCLEOTIDE SEQUENCE [MRNA]</scope>
</reference>
<sequence length="550" mass="59532">MGLKVNVSAIFMAVLLTLQTPTGQIHWGNLSKIGVVGIGSASYKVMTRSSHQSLVIKLMPNITLLNNCTRVEIAEYRRLLRTVLEPIRDALNAMTQNIRPVQSVASSRRHKRFAGVVLAGAALGVATAAQITAGIALHQSMLNSQAIDNLRASLETTNQAIEAIRQAGQEMILAVQGVQDYINNELIPSMNQLSCDLIGQKLGLKLLRYYTEILSLFGPSLRDPISAEISIQALSYALGGDINKVLEKLGYSGGDLLGILESRGIKARITHVDTESYFIVLSIAYPTLSEIKGVIVHRLEGVSYNIGSQEWYTTVPKYVATQGYLISNFDESSCTFMPEGTVCSQNALYPMSPLLQECLRGSTKSCARTLVSGSFGNRFILSQGNLIANCASILCKCYTTGTIINQDPDKILTYIAADHCPVVEVNGVTIQVGSRRYPDAVYLHRIDLGPPISLERLDVGTNLGNAIAKLEDAKELLESSDQILRSMKGLSSTSIVYILIAVCLGGLIGIPALICCCRGRCNKKGEQVGMSRPGLKPDLTGTSKSYVRSL</sequence>
<proteinExistence type="evidence at transcript level"/>
<evidence type="ECO:0000250" key="1"/>
<evidence type="ECO:0000250" key="2">
    <source>
        <dbReference type="UniProtKB" id="Q786F3"/>
    </source>
</evidence>
<evidence type="ECO:0000255" key="3"/>
<evidence type="ECO:0000305" key="4"/>
<dbReference type="EMBL" id="U08416">
    <property type="protein sequence ID" value="AAA50550.1"/>
    <property type="status" value="ALT_INIT"/>
    <property type="molecule type" value="mRNA"/>
</dbReference>
<dbReference type="SMR" id="P69357"/>
<dbReference type="GlyCosmos" id="P69357">
    <property type="glycosylation" value="3 sites, No reported glycans"/>
</dbReference>
<dbReference type="GO" id="GO:0020002">
    <property type="term" value="C:host cell plasma membrane"/>
    <property type="evidence" value="ECO:0007669"/>
    <property type="project" value="UniProtKB-SubCell"/>
</dbReference>
<dbReference type="GO" id="GO:0016020">
    <property type="term" value="C:membrane"/>
    <property type="evidence" value="ECO:0007669"/>
    <property type="project" value="UniProtKB-KW"/>
</dbReference>
<dbReference type="GO" id="GO:0019031">
    <property type="term" value="C:viral envelope"/>
    <property type="evidence" value="ECO:0007669"/>
    <property type="project" value="UniProtKB-KW"/>
</dbReference>
<dbReference type="GO" id="GO:0055036">
    <property type="term" value="C:virion membrane"/>
    <property type="evidence" value="ECO:0007669"/>
    <property type="project" value="UniProtKB-SubCell"/>
</dbReference>
<dbReference type="GO" id="GO:0019064">
    <property type="term" value="P:fusion of virus membrane with host plasma membrane"/>
    <property type="evidence" value="ECO:0007669"/>
    <property type="project" value="UniProtKB-KW"/>
</dbReference>
<dbReference type="GO" id="GO:0046718">
    <property type="term" value="P:symbiont entry into host cell"/>
    <property type="evidence" value="ECO:0007669"/>
    <property type="project" value="UniProtKB-KW"/>
</dbReference>
<dbReference type="Gene3D" id="1.10.287.2480">
    <property type="match status" value="1"/>
</dbReference>
<dbReference type="Gene3D" id="6.10.10.110">
    <property type="match status" value="1"/>
</dbReference>
<dbReference type="Gene3D" id="2.60.40.1690">
    <property type="entry name" value="Head and neck region of the ectodomain of NDV fusion glycoprotein"/>
    <property type="match status" value="1"/>
</dbReference>
<dbReference type="Gene3D" id="2.40.490.10">
    <property type="entry name" value="Newcastle disease virus like domain"/>
    <property type="match status" value="1"/>
</dbReference>
<dbReference type="InterPro" id="IPR000776">
    <property type="entry name" value="Fusion_F0_Paramyxovir"/>
</dbReference>
<dbReference type="Pfam" id="PF00523">
    <property type="entry name" value="Fusion_gly"/>
    <property type="match status" value="1"/>
</dbReference>
<dbReference type="SUPFAM" id="SSF69922">
    <property type="entry name" value="Head and neck region of the ectodomain of NDV fusion glycoprotein"/>
    <property type="match status" value="1"/>
</dbReference>
<dbReference type="SUPFAM" id="SSF58069">
    <property type="entry name" value="Virus ectodomain"/>
    <property type="match status" value="1"/>
</dbReference>